<reference key="1">
    <citation type="journal article" date="2006" name="Proc. Natl. Acad. Sci. U.S.A.">
        <title>The complete genome of Rhodococcus sp. RHA1 provides insights into a catabolic powerhouse.</title>
        <authorList>
            <person name="McLeod M.P."/>
            <person name="Warren R.L."/>
            <person name="Hsiao W.W.L."/>
            <person name="Araki N."/>
            <person name="Myhre M."/>
            <person name="Fernandes C."/>
            <person name="Miyazawa D."/>
            <person name="Wong W."/>
            <person name="Lillquist A.L."/>
            <person name="Wang D."/>
            <person name="Dosanjh M."/>
            <person name="Hara H."/>
            <person name="Petrescu A."/>
            <person name="Morin R.D."/>
            <person name="Yang G."/>
            <person name="Stott J.M."/>
            <person name="Schein J.E."/>
            <person name="Shin H."/>
            <person name="Smailus D."/>
            <person name="Siddiqui A.S."/>
            <person name="Marra M.A."/>
            <person name="Jones S.J.M."/>
            <person name="Holt R."/>
            <person name="Brinkman F.S.L."/>
            <person name="Miyauchi K."/>
            <person name="Fukuda M."/>
            <person name="Davies J.E."/>
            <person name="Mohn W.W."/>
            <person name="Eltis L.D."/>
        </authorList>
    </citation>
    <scope>NUCLEOTIDE SEQUENCE [LARGE SCALE GENOMIC DNA]</scope>
    <source>
        <strain>RHA1</strain>
    </source>
</reference>
<dbReference type="EC" id="2.7.2.3" evidence="1"/>
<dbReference type="EMBL" id="CP000431">
    <property type="protein sequence ID" value="ABG98942.1"/>
    <property type="molecule type" value="Genomic_DNA"/>
</dbReference>
<dbReference type="RefSeq" id="WP_009480445.1">
    <property type="nucleotide sequence ID" value="NC_008268.1"/>
</dbReference>
<dbReference type="SMR" id="Q0S0J4"/>
<dbReference type="KEGG" id="rha:RHA1_ro07178"/>
<dbReference type="eggNOG" id="COG0126">
    <property type="taxonomic scope" value="Bacteria"/>
</dbReference>
<dbReference type="HOGENOM" id="CLU_025427_0_2_11"/>
<dbReference type="OrthoDB" id="9808460at2"/>
<dbReference type="UniPathway" id="UPA00109">
    <property type="reaction ID" value="UER00185"/>
</dbReference>
<dbReference type="Proteomes" id="UP000008710">
    <property type="component" value="Chromosome"/>
</dbReference>
<dbReference type="GO" id="GO:0005829">
    <property type="term" value="C:cytosol"/>
    <property type="evidence" value="ECO:0007669"/>
    <property type="project" value="TreeGrafter"/>
</dbReference>
<dbReference type="GO" id="GO:0043531">
    <property type="term" value="F:ADP binding"/>
    <property type="evidence" value="ECO:0007669"/>
    <property type="project" value="TreeGrafter"/>
</dbReference>
<dbReference type="GO" id="GO:0005524">
    <property type="term" value="F:ATP binding"/>
    <property type="evidence" value="ECO:0007669"/>
    <property type="project" value="UniProtKB-KW"/>
</dbReference>
<dbReference type="GO" id="GO:0004618">
    <property type="term" value="F:phosphoglycerate kinase activity"/>
    <property type="evidence" value="ECO:0007669"/>
    <property type="project" value="UniProtKB-UniRule"/>
</dbReference>
<dbReference type="GO" id="GO:0006094">
    <property type="term" value="P:gluconeogenesis"/>
    <property type="evidence" value="ECO:0007669"/>
    <property type="project" value="TreeGrafter"/>
</dbReference>
<dbReference type="GO" id="GO:0006096">
    <property type="term" value="P:glycolytic process"/>
    <property type="evidence" value="ECO:0007669"/>
    <property type="project" value="UniProtKB-UniRule"/>
</dbReference>
<dbReference type="CDD" id="cd00318">
    <property type="entry name" value="Phosphoglycerate_kinase"/>
    <property type="match status" value="1"/>
</dbReference>
<dbReference type="FunFam" id="3.40.50.1260:FF:000003">
    <property type="entry name" value="Phosphoglycerate kinase"/>
    <property type="match status" value="1"/>
</dbReference>
<dbReference type="FunFam" id="3.40.50.1260:FF:000006">
    <property type="entry name" value="Phosphoglycerate kinase"/>
    <property type="match status" value="1"/>
</dbReference>
<dbReference type="Gene3D" id="3.40.50.1260">
    <property type="entry name" value="Phosphoglycerate kinase, N-terminal domain"/>
    <property type="match status" value="2"/>
</dbReference>
<dbReference type="HAMAP" id="MF_00145">
    <property type="entry name" value="Phosphoglyc_kinase"/>
    <property type="match status" value="1"/>
</dbReference>
<dbReference type="InterPro" id="IPR001576">
    <property type="entry name" value="Phosphoglycerate_kinase"/>
</dbReference>
<dbReference type="InterPro" id="IPR015824">
    <property type="entry name" value="Phosphoglycerate_kinase_N"/>
</dbReference>
<dbReference type="InterPro" id="IPR036043">
    <property type="entry name" value="Phosphoglycerate_kinase_sf"/>
</dbReference>
<dbReference type="PANTHER" id="PTHR11406">
    <property type="entry name" value="PHOSPHOGLYCERATE KINASE"/>
    <property type="match status" value="1"/>
</dbReference>
<dbReference type="PANTHER" id="PTHR11406:SF23">
    <property type="entry name" value="PHOSPHOGLYCERATE KINASE 1, CHLOROPLASTIC-RELATED"/>
    <property type="match status" value="1"/>
</dbReference>
<dbReference type="Pfam" id="PF00162">
    <property type="entry name" value="PGK"/>
    <property type="match status" value="1"/>
</dbReference>
<dbReference type="PIRSF" id="PIRSF000724">
    <property type="entry name" value="Pgk"/>
    <property type="match status" value="1"/>
</dbReference>
<dbReference type="PRINTS" id="PR00477">
    <property type="entry name" value="PHGLYCKINASE"/>
</dbReference>
<dbReference type="SUPFAM" id="SSF53748">
    <property type="entry name" value="Phosphoglycerate kinase"/>
    <property type="match status" value="1"/>
</dbReference>
<name>PGK_RHOJR</name>
<sequence length="403" mass="42101">MAVQTLDDLLNAGVEGRAVLVRSDLNVPLDGDRITDPGRIIASAPTLKALAEAGAKVIVTAHLGRPKGEPDPQYSLAPVAVKLAEVLGRNVQLAGDVVGQDALARAEGLTDGDVLLLENIRFDPRETSKDEAERTKLAKALVELVGDDGAFVSDGFGVVHRAQASVYEVAKLLPHYAGKLVEAEIKVLGKLTEEPERPYAVVLGGSKVSDKLAVIEALAPKVDTLVIGGGMYYTFLAAQGVSVGNSLCEESMIDTCKALLEQYADVIHIPQDVVIADSFSADAESKIVSVLEIPDGWMGLDIGPQSVRRFAAILTSAKTVFWNGPMGVFEFEKFAAGTKGVAEAIIEATGKGAYSVVGGGDSAAAVRQLGLPEDGFSHISTGGGASLEYLEGKELPGIAVLEG</sequence>
<keyword id="KW-0067">ATP-binding</keyword>
<keyword id="KW-0963">Cytoplasm</keyword>
<keyword id="KW-0324">Glycolysis</keyword>
<keyword id="KW-0418">Kinase</keyword>
<keyword id="KW-0547">Nucleotide-binding</keyword>
<keyword id="KW-0808">Transferase</keyword>
<proteinExistence type="inferred from homology"/>
<comment type="catalytic activity">
    <reaction evidence="1">
        <text>(2R)-3-phosphoglycerate + ATP = (2R)-3-phospho-glyceroyl phosphate + ADP</text>
        <dbReference type="Rhea" id="RHEA:14801"/>
        <dbReference type="ChEBI" id="CHEBI:30616"/>
        <dbReference type="ChEBI" id="CHEBI:57604"/>
        <dbReference type="ChEBI" id="CHEBI:58272"/>
        <dbReference type="ChEBI" id="CHEBI:456216"/>
        <dbReference type="EC" id="2.7.2.3"/>
    </reaction>
</comment>
<comment type="pathway">
    <text evidence="1">Carbohydrate degradation; glycolysis; pyruvate from D-glyceraldehyde 3-phosphate: step 2/5.</text>
</comment>
<comment type="subunit">
    <text evidence="1">Monomer.</text>
</comment>
<comment type="subcellular location">
    <subcellularLocation>
        <location evidence="1">Cytoplasm</location>
    </subcellularLocation>
</comment>
<comment type="similarity">
    <text evidence="1">Belongs to the phosphoglycerate kinase family.</text>
</comment>
<accession>Q0S0J4</accession>
<protein>
    <recommendedName>
        <fullName evidence="1">Phosphoglycerate kinase</fullName>
        <ecNumber evidence="1">2.7.2.3</ecNumber>
    </recommendedName>
</protein>
<evidence type="ECO:0000255" key="1">
    <source>
        <dbReference type="HAMAP-Rule" id="MF_00145"/>
    </source>
</evidence>
<organism>
    <name type="scientific">Rhodococcus jostii (strain RHA1)</name>
    <dbReference type="NCBI Taxonomy" id="101510"/>
    <lineage>
        <taxon>Bacteria</taxon>
        <taxon>Bacillati</taxon>
        <taxon>Actinomycetota</taxon>
        <taxon>Actinomycetes</taxon>
        <taxon>Mycobacteriales</taxon>
        <taxon>Nocardiaceae</taxon>
        <taxon>Rhodococcus</taxon>
    </lineage>
</organism>
<gene>
    <name evidence="1" type="primary">pgk</name>
    <name type="ordered locus">RHA1_ro07178</name>
</gene>
<feature type="chain" id="PRO_1000009644" description="Phosphoglycerate kinase">
    <location>
        <begin position="1"/>
        <end position="403"/>
    </location>
</feature>
<feature type="binding site" evidence="1">
    <location>
        <begin position="24"/>
        <end position="26"/>
    </location>
    <ligand>
        <name>substrate</name>
    </ligand>
</feature>
<feature type="binding site" evidence="1">
    <location>
        <position position="39"/>
    </location>
    <ligand>
        <name>substrate</name>
    </ligand>
</feature>
<feature type="binding site" evidence="1">
    <location>
        <begin position="62"/>
        <end position="65"/>
    </location>
    <ligand>
        <name>substrate</name>
    </ligand>
</feature>
<feature type="binding site" evidence="1">
    <location>
        <position position="121"/>
    </location>
    <ligand>
        <name>substrate</name>
    </ligand>
</feature>
<feature type="binding site" evidence="1">
    <location>
        <position position="161"/>
    </location>
    <ligand>
        <name>substrate</name>
    </ligand>
</feature>
<feature type="binding site" evidence="1">
    <location>
        <position position="211"/>
    </location>
    <ligand>
        <name>ATP</name>
        <dbReference type="ChEBI" id="CHEBI:30616"/>
    </ligand>
</feature>
<feature type="binding site" evidence="1">
    <location>
        <position position="299"/>
    </location>
    <ligand>
        <name>ATP</name>
        <dbReference type="ChEBI" id="CHEBI:30616"/>
    </ligand>
</feature>
<feature type="binding site" evidence="1">
    <location>
        <position position="330"/>
    </location>
    <ligand>
        <name>ATP</name>
        <dbReference type="ChEBI" id="CHEBI:30616"/>
    </ligand>
</feature>
<feature type="binding site" evidence="1">
    <location>
        <begin position="359"/>
        <end position="362"/>
    </location>
    <ligand>
        <name>ATP</name>
        <dbReference type="ChEBI" id="CHEBI:30616"/>
    </ligand>
</feature>